<protein>
    <recommendedName>
        <fullName>Antithrombin-III</fullName>
        <shortName>ATIII</shortName>
    </recommendedName>
    <alternativeName>
        <fullName>Serpin C1</fullName>
    </alternativeName>
</protein>
<evidence type="ECO:0000250" key="1"/>
<evidence type="ECO:0000256" key="2">
    <source>
        <dbReference type="SAM" id="MobiDB-lite"/>
    </source>
</evidence>
<evidence type="ECO:0000269" key="3">
    <source>
    </source>
</evidence>
<evidence type="ECO:0000305" key="4"/>
<keyword id="KW-0094">Blood coagulation</keyword>
<keyword id="KW-0903">Direct protein sequencing</keyword>
<keyword id="KW-0356">Hemostasis</keyword>
<keyword id="KW-0646">Protease inhibitor</keyword>
<keyword id="KW-1185">Reference proteome</keyword>
<keyword id="KW-0964">Secreted</keyword>
<keyword id="KW-0722">Serine protease inhibitor</keyword>
<keyword id="KW-0732">Signal</keyword>
<organism>
    <name type="scientific">Gallus gallus</name>
    <name type="common">Chicken</name>
    <dbReference type="NCBI Taxonomy" id="9031"/>
    <lineage>
        <taxon>Eukaryota</taxon>
        <taxon>Metazoa</taxon>
        <taxon>Chordata</taxon>
        <taxon>Craniata</taxon>
        <taxon>Vertebrata</taxon>
        <taxon>Euteleostomi</taxon>
        <taxon>Archelosauria</taxon>
        <taxon>Archosauria</taxon>
        <taxon>Dinosauria</taxon>
        <taxon>Saurischia</taxon>
        <taxon>Theropoda</taxon>
        <taxon>Coelurosauria</taxon>
        <taxon>Aves</taxon>
        <taxon>Neognathae</taxon>
        <taxon>Galloanserae</taxon>
        <taxon>Galliformes</taxon>
        <taxon>Phasianidae</taxon>
        <taxon>Phasianinae</taxon>
        <taxon>Gallus</taxon>
    </lineage>
</organism>
<reference key="1">
    <citation type="journal article" date="1993" name="Biochim. Biophys. Acta">
        <title>Developmental expression of chicken antithrombin III is regulated by increased RNA abundance and intracellular processing.</title>
        <authorList>
            <person name="Amrani D.L."/>
            <person name="Rosenberg J."/>
            <person name="Samad F."/>
            <person name="Bergtrom G."/>
            <person name="Banfield D.K."/>
        </authorList>
    </citation>
    <scope>NUCLEOTIDE SEQUENCE [MRNA]</scope>
    <source>
        <strain>White leghorn</strain>
        <tissue>Liver</tissue>
    </source>
</reference>
<reference key="2">
    <citation type="journal article" date="1982" name="J. Biochem.">
        <title>Chicken antithrombin. Isolation, characterization, and comparison with mammalian antithrombins and chicken ovalbumin.</title>
        <authorList>
            <person name="Koide T."/>
            <person name="Ohta Y."/>
            <person name="Odani S."/>
            <person name="Ono T."/>
        </authorList>
    </citation>
    <scope>PROTEIN SEQUENCE OF 18-36</scope>
</reference>
<sequence>MHLFIGVSLRPLGHGIPAPYAVEDICTAKPRDIPVNPICIYRNPEKKPQERRGAGAGEGQDPGVHKPPASGSCPGPTRAFGRRSFLQAPGPTPRTMRRTSSCRPS</sequence>
<comment type="function">
    <text evidence="1">Most important serine protease inhibitor in plasma that regulates the blood coagulation cascade. AT-III inhibits thrombin, matriptase-3/TMPRSS7, as well as factors IXa, Xa and XIa. Its inhibitory activity is greatly enhanced in the presence of heparin (By similarity).</text>
</comment>
<comment type="subunit">
    <text evidence="1">Forms protease inhibiting heterodimer with TMPRSS7.</text>
</comment>
<comment type="subcellular location">
    <subcellularLocation>
        <location evidence="1">Secreted</location>
        <location evidence="1">Extracellular space</location>
    </subcellularLocation>
</comment>
<comment type="tissue specificity">
    <text>Plasma.</text>
</comment>
<comment type="similarity">
    <text evidence="4">Belongs to the serpin family.</text>
</comment>
<dbReference type="EMBL" id="L07842">
    <property type="protein sequence ID" value="AAA49075.1"/>
    <property type="molecule type" value="mRNA"/>
</dbReference>
<dbReference type="PIR" id="S28177">
    <property type="entry name" value="S28177"/>
</dbReference>
<dbReference type="SMR" id="Q03352"/>
<dbReference type="FunCoup" id="Q03352">
    <property type="interactions" value="1096"/>
</dbReference>
<dbReference type="GlyGen" id="Q03352">
    <property type="glycosylation" value="2 sites"/>
</dbReference>
<dbReference type="VEuPathDB" id="HostDB:geneid_424440"/>
<dbReference type="InParanoid" id="Q03352"/>
<dbReference type="OrthoDB" id="9440847at2759"/>
<dbReference type="Proteomes" id="UP000000539">
    <property type="component" value="Unassembled WGS sequence"/>
</dbReference>
<dbReference type="GO" id="GO:0005576">
    <property type="term" value="C:extracellular region"/>
    <property type="evidence" value="ECO:0007669"/>
    <property type="project" value="UniProtKB-SubCell"/>
</dbReference>
<dbReference type="GO" id="GO:0004867">
    <property type="term" value="F:serine-type endopeptidase inhibitor activity"/>
    <property type="evidence" value="ECO:0007669"/>
    <property type="project" value="UniProtKB-KW"/>
</dbReference>
<dbReference type="GO" id="GO:0007596">
    <property type="term" value="P:blood coagulation"/>
    <property type="evidence" value="ECO:0007669"/>
    <property type="project" value="UniProtKB-KW"/>
</dbReference>
<name>ANT3_CHICK</name>
<accession>Q03352</accession>
<proteinExistence type="evidence at protein level"/>
<feature type="signal peptide" evidence="3">
    <location>
        <begin position="1"/>
        <end position="17"/>
    </location>
</feature>
<feature type="chain" id="PRO_0000032493" description="Antithrombin-III">
    <location>
        <begin position="18"/>
        <end position="105" status="greater than"/>
    </location>
</feature>
<feature type="region of interest" description="Disordered" evidence="2">
    <location>
        <begin position="38"/>
        <end position="105"/>
    </location>
</feature>
<feature type="compositionally biased region" description="Basic and acidic residues" evidence="2">
    <location>
        <begin position="43"/>
        <end position="53"/>
    </location>
</feature>
<feature type="sequence conflict" description="In Ref. 2; AA sequence." evidence="4" ref="2">
    <original>R</original>
    <variation>T</variation>
    <location>
        <position position="31"/>
    </location>
</feature>
<feature type="non-terminal residue">
    <location>
        <position position="105"/>
    </location>
</feature>
<gene>
    <name type="primary">SERPINC1</name>
    <name type="synonym">AT3</name>
</gene>